<feature type="chain" id="PRO_1000202284" description="Ribonuclease HII">
    <location>
        <begin position="1"/>
        <end position="230"/>
    </location>
</feature>
<feature type="domain" description="RNase H type-2" evidence="2">
    <location>
        <begin position="28"/>
        <end position="217"/>
    </location>
</feature>
<feature type="region of interest" description="Disordered" evidence="3">
    <location>
        <begin position="211"/>
        <end position="230"/>
    </location>
</feature>
<feature type="binding site" evidence="1">
    <location>
        <position position="34"/>
    </location>
    <ligand>
        <name>a divalent metal cation</name>
        <dbReference type="ChEBI" id="CHEBI:60240"/>
    </ligand>
</feature>
<feature type="binding site" evidence="1">
    <location>
        <position position="35"/>
    </location>
    <ligand>
        <name>a divalent metal cation</name>
        <dbReference type="ChEBI" id="CHEBI:60240"/>
    </ligand>
</feature>
<feature type="binding site" evidence="1">
    <location>
        <position position="126"/>
    </location>
    <ligand>
        <name>a divalent metal cation</name>
        <dbReference type="ChEBI" id="CHEBI:60240"/>
    </ligand>
</feature>
<evidence type="ECO:0000255" key="1">
    <source>
        <dbReference type="HAMAP-Rule" id="MF_00052"/>
    </source>
</evidence>
<evidence type="ECO:0000255" key="2">
    <source>
        <dbReference type="PROSITE-ProRule" id="PRU01319"/>
    </source>
</evidence>
<evidence type="ECO:0000256" key="3">
    <source>
        <dbReference type="SAM" id="MobiDB-lite"/>
    </source>
</evidence>
<comment type="function">
    <text evidence="1">Endonuclease that specifically degrades the RNA of RNA-DNA hybrids.</text>
</comment>
<comment type="catalytic activity">
    <reaction evidence="1">
        <text>Endonucleolytic cleavage to 5'-phosphomonoester.</text>
        <dbReference type="EC" id="3.1.26.4"/>
    </reaction>
</comment>
<comment type="cofactor">
    <cofactor evidence="1">
        <name>Mn(2+)</name>
        <dbReference type="ChEBI" id="CHEBI:29035"/>
    </cofactor>
    <cofactor evidence="1">
        <name>Mg(2+)</name>
        <dbReference type="ChEBI" id="CHEBI:18420"/>
    </cofactor>
    <text evidence="1">Manganese or magnesium. Binds 1 divalent metal ion per monomer in the absence of substrate. May bind a second metal ion after substrate binding.</text>
</comment>
<comment type="subcellular location">
    <subcellularLocation>
        <location evidence="1">Cytoplasm</location>
    </subcellularLocation>
</comment>
<comment type="similarity">
    <text evidence="1">Belongs to the RNase HII family.</text>
</comment>
<organism>
    <name type="scientific">Geobacter sp. (strain M21)</name>
    <dbReference type="NCBI Taxonomy" id="443144"/>
    <lineage>
        <taxon>Bacteria</taxon>
        <taxon>Pseudomonadati</taxon>
        <taxon>Thermodesulfobacteriota</taxon>
        <taxon>Desulfuromonadia</taxon>
        <taxon>Geobacterales</taxon>
        <taxon>Geobacteraceae</taxon>
        <taxon>Geobacter</taxon>
    </lineage>
</organism>
<name>RNH2_GEOSM</name>
<protein>
    <recommendedName>
        <fullName evidence="1">Ribonuclease HII</fullName>
        <shortName evidence="1">RNase HII</shortName>
        <ecNumber evidence="1">3.1.26.4</ecNumber>
    </recommendedName>
</protein>
<reference key="1">
    <citation type="submission" date="2009-07" db="EMBL/GenBank/DDBJ databases">
        <title>Complete sequence of Geobacter sp. M21.</title>
        <authorList>
            <consortium name="US DOE Joint Genome Institute"/>
            <person name="Lucas S."/>
            <person name="Copeland A."/>
            <person name="Lapidus A."/>
            <person name="Glavina del Rio T."/>
            <person name="Dalin E."/>
            <person name="Tice H."/>
            <person name="Bruce D."/>
            <person name="Goodwin L."/>
            <person name="Pitluck S."/>
            <person name="Saunders E."/>
            <person name="Brettin T."/>
            <person name="Detter J.C."/>
            <person name="Han C."/>
            <person name="Larimer F."/>
            <person name="Land M."/>
            <person name="Hauser L."/>
            <person name="Kyrpides N."/>
            <person name="Ovchinnikova G."/>
            <person name="Lovley D."/>
        </authorList>
    </citation>
    <scope>NUCLEOTIDE SEQUENCE [LARGE SCALE GENOMIC DNA]</scope>
    <source>
        <strain>M21</strain>
    </source>
</reference>
<accession>C6E5I4</accession>
<sequence>MTGLFPDNPKSPIDLLALEGQALRRGFFRIAGIDEAGRGPLAGPVVAAAVILPPGLLLPGVNDSKQLTEEKREELFDVIHREALAVGVGIGDHALVDRINILQATLSAMRDAVRALSMTPGFLLIDGISNIPMNIPQRTVKKGDSLSLSIASASIIAKVTRDRMMVEYDAQYPGYGFASHKGYGAASHLAAIAELGPCPIHRKTFSGVKEHLPSQPDCDTAGPSTGLFSF</sequence>
<dbReference type="EC" id="3.1.26.4" evidence="1"/>
<dbReference type="EMBL" id="CP001661">
    <property type="protein sequence ID" value="ACT19508.1"/>
    <property type="molecule type" value="Genomic_DNA"/>
</dbReference>
<dbReference type="SMR" id="C6E5I4"/>
<dbReference type="STRING" id="443144.GM21_3486"/>
<dbReference type="KEGG" id="gem:GM21_3486"/>
<dbReference type="eggNOG" id="COG0164">
    <property type="taxonomic scope" value="Bacteria"/>
</dbReference>
<dbReference type="HOGENOM" id="CLU_036532_2_1_7"/>
<dbReference type="OrthoDB" id="9803420at2"/>
<dbReference type="GO" id="GO:0005737">
    <property type="term" value="C:cytoplasm"/>
    <property type="evidence" value="ECO:0007669"/>
    <property type="project" value="UniProtKB-SubCell"/>
</dbReference>
<dbReference type="GO" id="GO:0032299">
    <property type="term" value="C:ribonuclease H2 complex"/>
    <property type="evidence" value="ECO:0007669"/>
    <property type="project" value="TreeGrafter"/>
</dbReference>
<dbReference type="GO" id="GO:0030145">
    <property type="term" value="F:manganese ion binding"/>
    <property type="evidence" value="ECO:0007669"/>
    <property type="project" value="UniProtKB-UniRule"/>
</dbReference>
<dbReference type="GO" id="GO:0003723">
    <property type="term" value="F:RNA binding"/>
    <property type="evidence" value="ECO:0007669"/>
    <property type="project" value="InterPro"/>
</dbReference>
<dbReference type="GO" id="GO:0004523">
    <property type="term" value="F:RNA-DNA hybrid ribonuclease activity"/>
    <property type="evidence" value="ECO:0007669"/>
    <property type="project" value="UniProtKB-UniRule"/>
</dbReference>
<dbReference type="GO" id="GO:0043137">
    <property type="term" value="P:DNA replication, removal of RNA primer"/>
    <property type="evidence" value="ECO:0007669"/>
    <property type="project" value="TreeGrafter"/>
</dbReference>
<dbReference type="GO" id="GO:0006298">
    <property type="term" value="P:mismatch repair"/>
    <property type="evidence" value="ECO:0007669"/>
    <property type="project" value="TreeGrafter"/>
</dbReference>
<dbReference type="CDD" id="cd07182">
    <property type="entry name" value="RNase_HII_bacteria_HII_like"/>
    <property type="match status" value="1"/>
</dbReference>
<dbReference type="FunFam" id="3.30.420.10:FF:000006">
    <property type="entry name" value="Ribonuclease HII"/>
    <property type="match status" value="1"/>
</dbReference>
<dbReference type="Gene3D" id="3.30.420.10">
    <property type="entry name" value="Ribonuclease H-like superfamily/Ribonuclease H"/>
    <property type="match status" value="1"/>
</dbReference>
<dbReference type="HAMAP" id="MF_00052_B">
    <property type="entry name" value="RNase_HII_B"/>
    <property type="match status" value="1"/>
</dbReference>
<dbReference type="InterPro" id="IPR022898">
    <property type="entry name" value="RNase_HII"/>
</dbReference>
<dbReference type="InterPro" id="IPR001352">
    <property type="entry name" value="RNase_HII/HIII"/>
</dbReference>
<dbReference type="InterPro" id="IPR024567">
    <property type="entry name" value="RNase_HII/HIII_dom"/>
</dbReference>
<dbReference type="InterPro" id="IPR012337">
    <property type="entry name" value="RNaseH-like_sf"/>
</dbReference>
<dbReference type="InterPro" id="IPR036397">
    <property type="entry name" value="RNaseH_sf"/>
</dbReference>
<dbReference type="NCBIfam" id="NF000594">
    <property type="entry name" value="PRK00015.1-1"/>
    <property type="match status" value="1"/>
</dbReference>
<dbReference type="NCBIfam" id="NF000595">
    <property type="entry name" value="PRK00015.1-3"/>
    <property type="match status" value="1"/>
</dbReference>
<dbReference type="PANTHER" id="PTHR10954">
    <property type="entry name" value="RIBONUCLEASE H2 SUBUNIT A"/>
    <property type="match status" value="1"/>
</dbReference>
<dbReference type="PANTHER" id="PTHR10954:SF18">
    <property type="entry name" value="RIBONUCLEASE HII"/>
    <property type="match status" value="1"/>
</dbReference>
<dbReference type="Pfam" id="PF01351">
    <property type="entry name" value="RNase_HII"/>
    <property type="match status" value="1"/>
</dbReference>
<dbReference type="SUPFAM" id="SSF53098">
    <property type="entry name" value="Ribonuclease H-like"/>
    <property type="match status" value="1"/>
</dbReference>
<dbReference type="PROSITE" id="PS51975">
    <property type="entry name" value="RNASE_H_2"/>
    <property type="match status" value="1"/>
</dbReference>
<keyword id="KW-0963">Cytoplasm</keyword>
<keyword id="KW-0255">Endonuclease</keyword>
<keyword id="KW-0378">Hydrolase</keyword>
<keyword id="KW-0464">Manganese</keyword>
<keyword id="KW-0479">Metal-binding</keyword>
<keyword id="KW-0540">Nuclease</keyword>
<gene>
    <name evidence="1" type="primary">rnhB</name>
    <name type="ordered locus">GM21_3486</name>
</gene>
<proteinExistence type="inferred from homology"/>